<accession>Q6GDD1</accession>
<sequence>MIKKRIIPCLDVKDGRVVKGIQFKGLRDIGNPVDLAMYYNEAGADELVFLDISKTEEGHSLMLEVIEQTASRLFIPLTVGGGIQSLDDITQLLNHGADKVSLNSSALKNPQLIKQASDKFGRQCICIAIDSYYDPERKAHYCCTHGGKKLTNIKVYDWVQQVEQLGAGELLVTSMGHDGMKQGFDIEHLAKIKSLVNIPIIASGGGGNAQHFVELFDQTDVSAGLAASILHDRETTVQSIKEAIRQGGIAVR</sequence>
<dbReference type="EC" id="4.3.2.10" evidence="1"/>
<dbReference type="EMBL" id="BX571856">
    <property type="protein sequence ID" value="CAG41730.1"/>
    <property type="molecule type" value="Genomic_DNA"/>
</dbReference>
<dbReference type="SMR" id="Q6GDD1"/>
<dbReference type="KEGG" id="sar:SAR2755"/>
<dbReference type="HOGENOM" id="CLU_048577_4_0_9"/>
<dbReference type="UniPathway" id="UPA00031">
    <property type="reaction ID" value="UER00010"/>
</dbReference>
<dbReference type="Proteomes" id="UP000000596">
    <property type="component" value="Chromosome"/>
</dbReference>
<dbReference type="GO" id="GO:0005737">
    <property type="term" value="C:cytoplasm"/>
    <property type="evidence" value="ECO:0007669"/>
    <property type="project" value="UniProtKB-SubCell"/>
</dbReference>
<dbReference type="GO" id="GO:0000107">
    <property type="term" value="F:imidazoleglycerol-phosphate synthase activity"/>
    <property type="evidence" value="ECO:0007669"/>
    <property type="project" value="UniProtKB-UniRule"/>
</dbReference>
<dbReference type="GO" id="GO:0016829">
    <property type="term" value="F:lyase activity"/>
    <property type="evidence" value="ECO:0007669"/>
    <property type="project" value="UniProtKB-KW"/>
</dbReference>
<dbReference type="GO" id="GO:0000105">
    <property type="term" value="P:L-histidine biosynthetic process"/>
    <property type="evidence" value="ECO:0007669"/>
    <property type="project" value="UniProtKB-UniRule"/>
</dbReference>
<dbReference type="CDD" id="cd04731">
    <property type="entry name" value="HisF"/>
    <property type="match status" value="1"/>
</dbReference>
<dbReference type="FunFam" id="3.20.20.70:FF:000462">
    <property type="entry name" value="Multifunctional fusion protein"/>
    <property type="match status" value="1"/>
</dbReference>
<dbReference type="Gene3D" id="3.20.20.70">
    <property type="entry name" value="Aldolase class I"/>
    <property type="match status" value="1"/>
</dbReference>
<dbReference type="HAMAP" id="MF_01013">
    <property type="entry name" value="HisF"/>
    <property type="match status" value="1"/>
</dbReference>
<dbReference type="InterPro" id="IPR013785">
    <property type="entry name" value="Aldolase_TIM"/>
</dbReference>
<dbReference type="InterPro" id="IPR006062">
    <property type="entry name" value="His_biosynth"/>
</dbReference>
<dbReference type="InterPro" id="IPR004651">
    <property type="entry name" value="HisF"/>
</dbReference>
<dbReference type="InterPro" id="IPR050064">
    <property type="entry name" value="IGPS_HisA/HisF"/>
</dbReference>
<dbReference type="InterPro" id="IPR011060">
    <property type="entry name" value="RibuloseP-bd_barrel"/>
</dbReference>
<dbReference type="NCBIfam" id="TIGR00735">
    <property type="entry name" value="hisF"/>
    <property type="match status" value="1"/>
</dbReference>
<dbReference type="PANTHER" id="PTHR21235:SF2">
    <property type="entry name" value="IMIDAZOLE GLYCEROL PHOSPHATE SYNTHASE HISHF"/>
    <property type="match status" value="1"/>
</dbReference>
<dbReference type="PANTHER" id="PTHR21235">
    <property type="entry name" value="IMIDAZOLE GLYCEROL PHOSPHATE SYNTHASE SUBUNIT HISF/H IGP SYNTHASE SUBUNIT HISF/H"/>
    <property type="match status" value="1"/>
</dbReference>
<dbReference type="Pfam" id="PF00977">
    <property type="entry name" value="His_biosynth"/>
    <property type="match status" value="1"/>
</dbReference>
<dbReference type="SUPFAM" id="SSF51366">
    <property type="entry name" value="Ribulose-phoshate binding barrel"/>
    <property type="match status" value="1"/>
</dbReference>
<reference key="1">
    <citation type="journal article" date="2004" name="Proc. Natl. Acad. Sci. U.S.A.">
        <title>Complete genomes of two clinical Staphylococcus aureus strains: evidence for the rapid evolution of virulence and drug resistance.</title>
        <authorList>
            <person name="Holden M.T.G."/>
            <person name="Feil E.J."/>
            <person name="Lindsay J.A."/>
            <person name="Peacock S.J."/>
            <person name="Day N.P.J."/>
            <person name="Enright M.C."/>
            <person name="Foster T.J."/>
            <person name="Moore C.E."/>
            <person name="Hurst L."/>
            <person name="Atkin R."/>
            <person name="Barron A."/>
            <person name="Bason N."/>
            <person name="Bentley S.D."/>
            <person name="Chillingworth C."/>
            <person name="Chillingworth T."/>
            <person name="Churcher C."/>
            <person name="Clark L."/>
            <person name="Corton C."/>
            <person name="Cronin A."/>
            <person name="Doggett J."/>
            <person name="Dowd L."/>
            <person name="Feltwell T."/>
            <person name="Hance Z."/>
            <person name="Harris B."/>
            <person name="Hauser H."/>
            <person name="Holroyd S."/>
            <person name="Jagels K."/>
            <person name="James K.D."/>
            <person name="Lennard N."/>
            <person name="Line A."/>
            <person name="Mayes R."/>
            <person name="Moule S."/>
            <person name="Mungall K."/>
            <person name="Ormond D."/>
            <person name="Quail M.A."/>
            <person name="Rabbinowitsch E."/>
            <person name="Rutherford K.M."/>
            <person name="Sanders M."/>
            <person name="Sharp S."/>
            <person name="Simmonds M."/>
            <person name="Stevens K."/>
            <person name="Whitehead S."/>
            <person name="Barrell B.G."/>
            <person name="Spratt B.G."/>
            <person name="Parkhill J."/>
        </authorList>
    </citation>
    <scope>NUCLEOTIDE SEQUENCE [LARGE SCALE GENOMIC DNA]</scope>
    <source>
        <strain>MRSA252</strain>
    </source>
</reference>
<feature type="chain" id="PRO_0000142233" description="Imidazole glycerol phosphate synthase subunit HisF">
    <location>
        <begin position="1"/>
        <end position="252"/>
    </location>
</feature>
<feature type="active site" evidence="1">
    <location>
        <position position="11"/>
    </location>
</feature>
<feature type="active site" evidence="1">
    <location>
        <position position="130"/>
    </location>
</feature>
<name>HIS6_STAAR</name>
<proteinExistence type="inferred from homology"/>
<gene>
    <name evidence="1" type="primary">hisF</name>
    <name type="ordered locus">SAR2755</name>
</gene>
<comment type="function">
    <text evidence="1">IGPS catalyzes the conversion of PRFAR and glutamine to IGP, AICAR and glutamate. The HisF subunit catalyzes the cyclization activity that produces IGP and AICAR from PRFAR using the ammonia provided by the HisH subunit.</text>
</comment>
<comment type="catalytic activity">
    <reaction evidence="1">
        <text>5-[(5-phospho-1-deoxy-D-ribulos-1-ylimino)methylamino]-1-(5-phospho-beta-D-ribosyl)imidazole-4-carboxamide + L-glutamine = D-erythro-1-(imidazol-4-yl)glycerol 3-phosphate + 5-amino-1-(5-phospho-beta-D-ribosyl)imidazole-4-carboxamide + L-glutamate + H(+)</text>
        <dbReference type="Rhea" id="RHEA:24793"/>
        <dbReference type="ChEBI" id="CHEBI:15378"/>
        <dbReference type="ChEBI" id="CHEBI:29985"/>
        <dbReference type="ChEBI" id="CHEBI:58278"/>
        <dbReference type="ChEBI" id="CHEBI:58359"/>
        <dbReference type="ChEBI" id="CHEBI:58475"/>
        <dbReference type="ChEBI" id="CHEBI:58525"/>
        <dbReference type="EC" id="4.3.2.10"/>
    </reaction>
</comment>
<comment type="pathway">
    <text evidence="1">Amino-acid biosynthesis; L-histidine biosynthesis; L-histidine from 5-phospho-alpha-D-ribose 1-diphosphate: step 5/9.</text>
</comment>
<comment type="subunit">
    <text evidence="1">Heterodimer of HisH and HisF.</text>
</comment>
<comment type="subcellular location">
    <subcellularLocation>
        <location evidence="1">Cytoplasm</location>
    </subcellularLocation>
</comment>
<comment type="similarity">
    <text evidence="1">Belongs to the HisA/HisF family.</text>
</comment>
<keyword id="KW-0028">Amino-acid biosynthesis</keyword>
<keyword id="KW-0963">Cytoplasm</keyword>
<keyword id="KW-0368">Histidine biosynthesis</keyword>
<keyword id="KW-0456">Lyase</keyword>
<organism>
    <name type="scientific">Staphylococcus aureus (strain MRSA252)</name>
    <dbReference type="NCBI Taxonomy" id="282458"/>
    <lineage>
        <taxon>Bacteria</taxon>
        <taxon>Bacillati</taxon>
        <taxon>Bacillota</taxon>
        <taxon>Bacilli</taxon>
        <taxon>Bacillales</taxon>
        <taxon>Staphylococcaceae</taxon>
        <taxon>Staphylococcus</taxon>
    </lineage>
</organism>
<protein>
    <recommendedName>
        <fullName evidence="1">Imidazole glycerol phosphate synthase subunit HisF</fullName>
        <ecNumber evidence="1">4.3.2.10</ecNumber>
    </recommendedName>
    <alternativeName>
        <fullName evidence="1">IGP synthase cyclase subunit</fullName>
    </alternativeName>
    <alternativeName>
        <fullName evidence="1">IGP synthase subunit HisF</fullName>
    </alternativeName>
    <alternativeName>
        <fullName evidence="1">ImGP synthase subunit HisF</fullName>
        <shortName evidence="1">IGPS subunit HisF</shortName>
    </alternativeName>
</protein>
<evidence type="ECO:0000255" key="1">
    <source>
        <dbReference type="HAMAP-Rule" id="MF_01013"/>
    </source>
</evidence>